<keyword id="KW-0326">Glycosidase</keyword>
<keyword id="KW-0378">Hydrolase</keyword>
<keyword id="KW-0456">Lyase</keyword>
<keyword id="KW-0464">Manganese</keyword>
<keyword id="KW-0479">Metal-binding</keyword>
<name>PSUG_THESQ</name>
<accession>B1LBK3</accession>
<organism>
    <name type="scientific">Thermotoga sp. (strain RQ2)</name>
    <dbReference type="NCBI Taxonomy" id="126740"/>
    <lineage>
        <taxon>Bacteria</taxon>
        <taxon>Thermotogati</taxon>
        <taxon>Thermotogota</taxon>
        <taxon>Thermotogae</taxon>
        <taxon>Thermotogales</taxon>
        <taxon>Thermotogaceae</taxon>
        <taxon>Thermotoga</taxon>
    </lineage>
</organism>
<proteinExistence type="inferred from homology"/>
<dbReference type="EC" id="4.2.1.70" evidence="1"/>
<dbReference type="EMBL" id="CP000969">
    <property type="protein sequence ID" value="ACB09701.1"/>
    <property type="molecule type" value="Genomic_DNA"/>
</dbReference>
<dbReference type="RefSeq" id="WP_008195064.1">
    <property type="nucleotide sequence ID" value="NC_010483.1"/>
</dbReference>
<dbReference type="SMR" id="B1LBK3"/>
<dbReference type="KEGG" id="trq:TRQ2_1357"/>
<dbReference type="HOGENOM" id="CLU_012201_0_1_0"/>
<dbReference type="Proteomes" id="UP000001687">
    <property type="component" value="Chromosome"/>
</dbReference>
<dbReference type="GO" id="GO:0005737">
    <property type="term" value="C:cytoplasm"/>
    <property type="evidence" value="ECO:0007669"/>
    <property type="project" value="TreeGrafter"/>
</dbReference>
<dbReference type="GO" id="GO:0016798">
    <property type="term" value="F:hydrolase activity, acting on glycosyl bonds"/>
    <property type="evidence" value="ECO:0007669"/>
    <property type="project" value="UniProtKB-KW"/>
</dbReference>
<dbReference type="GO" id="GO:0046872">
    <property type="term" value="F:metal ion binding"/>
    <property type="evidence" value="ECO:0007669"/>
    <property type="project" value="UniProtKB-KW"/>
</dbReference>
<dbReference type="GO" id="GO:0004730">
    <property type="term" value="F:pseudouridylate synthase activity"/>
    <property type="evidence" value="ECO:0007669"/>
    <property type="project" value="UniProtKB-UniRule"/>
</dbReference>
<dbReference type="GO" id="GO:0046113">
    <property type="term" value="P:nucleobase catabolic process"/>
    <property type="evidence" value="ECO:0007669"/>
    <property type="project" value="UniProtKB-UniRule"/>
</dbReference>
<dbReference type="Gene3D" id="3.40.1790.10">
    <property type="entry name" value="Indigoidine synthase domain"/>
    <property type="match status" value="1"/>
</dbReference>
<dbReference type="HAMAP" id="MF_01876">
    <property type="entry name" value="PsiMP_glycosidase"/>
    <property type="match status" value="1"/>
</dbReference>
<dbReference type="InterPro" id="IPR022830">
    <property type="entry name" value="Indigdn_synthA-like"/>
</dbReference>
<dbReference type="InterPro" id="IPR007342">
    <property type="entry name" value="PsuG"/>
</dbReference>
<dbReference type="PANTHER" id="PTHR42909:SF1">
    <property type="entry name" value="CARBOHYDRATE KINASE PFKB DOMAIN-CONTAINING PROTEIN"/>
    <property type="match status" value="1"/>
</dbReference>
<dbReference type="PANTHER" id="PTHR42909">
    <property type="entry name" value="ZGC:136858"/>
    <property type="match status" value="1"/>
</dbReference>
<dbReference type="Pfam" id="PF04227">
    <property type="entry name" value="Indigoidine_A"/>
    <property type="match status" value="1"/>
</dbReference>
<dbReference type="SUPFAM" id="SSF110581">
    <property type="entry name" value="Indigoidine synthase A-like"/>
    <property type="match status" value="1"/>
</dbReference>
<gene>
    <name evidence="1" type="primary">psuG</name>
    <name type="ordered locus">TRQ2_1357</name>
</gene>
<comment type="function">
    <text evidence="1">Catalyzes the reversible cleavage of pseudouridine 5'-phosphate (PsiMP) to ribose 5-phosphate and uracil. Functions biologically in the cleavage direction, as part of a pseudouridine degradation pathway.</text>
</comment>
<comment type="catalytic activity">
    <reaction evidence="1">
        <text>D-ribose 5-phosphate + uracil = psi-UMP + H2O</text>
        <dbReference type="Rhea" id="RHEA:18337"/>
        <dbReference type="ChEBI" id="CHEBI:15377"/>
        <dbReference type="ChEBI" id="CHEBI:17568"/>
        <dbReference type="ChEBI" id="CHEBI:58380"/>
        <dbReference type="ChEBI" id="CHEBI:78346"/>
        <dbReference type="EC" id="4.2.1.70"/>
    </reaction>
</comment>
<comment type="cofactor">
    <cofactor evidence="1">
        <name>Mn(2+)</name>
        <dbReference type="ChEBI" id="CHEBI:29035"/>
    </cofactor>
    <text evidence="1">Binds 1 Mn(2+) ion per subunit.</text>
</comment>
<comment type="subunit">
    <text evidence="1">Homotrimer.</text>
</comment>
<comment type="similarity">
    <text evidence="1">Belongs to the pseudouridine-5'-phosphate glycosidase family.</text>
</comment>
<sequence>MIIESRIEKGKPVVGMETTVFVHGLPRKEAIELFRRAKEISREKGFQLAVIGILKGKIVAGMSEEELEAMMREGADKVGTREIPIVVAEGKNAATTVSATIFLSRRIGIEVVVTGGTGGVHPGRVDVSQDLTEMSSSRAILVSSGIKSILDVEATFEMLETLEIPLIGFRTDEFPLFFSRKSGRRVPRVENVEEVLKIYETMKEIELEKTLMVLNPVPEEYEVPHDEIERLLEKIELEVEGKEVTPFLLKKLVEMTNGRTLKANLALLEENVKLAGEIAVKLKRS</sequence>
<protein>
    <recommendedName>
        <fullName evidence="1">Pseudouridine-5'-phosphate glycosidase</fullName>
        <shortName evidence="1">PsiMP glycosidase</shortName>
        <ecNumber evidence="1">4.2.1.70</ecNumber>
    </recommendedName>
</protein>
<reference key="1">
    <citation type="journal article" date="2011" name="J. Bacteriol.">
        <title>Genome sequence of Thermotoga sp. strain RQ2, a hyperthermophilic bacterium isolated from a geothermally heated region of the seafloor near Ribeira Quente, the Azores.</title>
        <authorList>
            <person name="Swithers K.S."/>
            <person name="DiPippo J.L."/>
            <person name="Bruce D.C."/>
            <person name="Detter C."/>
            <person name="Tapia R."/>
            <person name="Han S."/>
            <person name="Saunders E."/>
            <person name="Goodwin L.A."/>
            <person name="Han J."/>
            <person name="Woyke T."/>
            <person name="Pitluck S."/>
            <person name="Pennacchio L."/>
            <person name="Nolan M."/>
            <person name="Mikhailova N."/>
            <person name="Lykidis A."/>
            <person name="Land M.L."/>
            <person name="Brettin T."/>
            <person name="Stetter K.O."/>
            <person name="Nelson K.E."/>
            <person name="Gogarten J.P."/>
            <person name="Noll K.M."/>
        </authorList>
    </citation>
    <scope>NUCLEOTIDE SEQUENCE [LARGE SCALE GENOMIC DNA]</scope>
    <source>
        <strain>RQ2</strain>
    </source>
</reference>
<evidence type="ECO:0000255" key="1">
    <source>
        <dbReference type="HAMAP-Rule" id="MF_01876"/>
    </source>
</evidence>
<feature type="chain" id="PRO_0000390558" description="Pseudouridine-5'-phosphate glycosidase">
    <location>
        <begin position="1"/>
        <end position="285"/>
    </location>
</feature>
<feature type="active site" description="Proton donor" evidence="1">
    <location>
        <position position="17"/>
    </location>
</feature>
<feature type="active site" description="Nucleophile" evidence="1">
    <location>
        <position position="147"/>
    </location>
</feature>
<feature type="binding site" evidence="1">
    <location>
        <position position="77"/>
    </location>
    <ligand>
        <name>substrate</name>
    </ligand>
</feature>
<feature type="binding site" evidence="1">
    <location>
        <position position="97"/>
    </location>
    <ligand>
        <name>substrate</name>
    </ligand>
</feature>
<feature type="binding site" evidence="1">
    <location>
        <position position="126"/>
    </location>
    <ligand>
        <name>Mn(2+)</name>
        <dbReference type="ChEBI" id="CHEBI:29035"/>
    </ligand>
</feature>
<feature type="binding site" evidence="1">
    <location>
        <begin position="128"/>
        <end position="130"/>
    </location>
    <ligand>
        <name>substrate</name>
    </ligand>
</feature>